<keyword id="KW-0131">Cell cycle</keyword>
<keyword id="KW-0132">Cell division</keyword>
<keyword id="KW-0195">Cyclin</keyword>
<keyword id="KW-1185">Reference proteome</keyword>
<protein>
    <recommendedName>
        <fullName>G1/S-specific cyclin CLN1</fullName>
    </recommendedName>
</protein>
<sequence>MNHSEVKTGLIVTAKQTYYPIELSNAELLTHYETIQEYHEEISQNVLVQSSKTKPDIKLIDQQPEMNPHQTREAIVTFLYQLSVMTRVSNGIFFHAVRFYDRYCSKRVVLKDQAKLVVGTCLWLAAKTWGGCNHIINNVSIPTGGRFYGPNPRARIPRLSELVHYCGGSDLFDESMFIQMERHILDTLNWDVYEPMINDYILNVDENCLIQYELYKNQLQNNNSNGKEWSCKRKSQSSDDSDATVEEHISSSPQSTGLDGDTTTMDEDEELNSKIKLINLKRFLIDLSCWQYNLLKFELYEICNGMFSIINKFTNQDQGPFLSMPIGNDINSNTQTQVFSIIINGIVNSPPSLVEVYKEQYGIVPFILQVKDYNLELQKKLQLASTIDLTRKIAVNSRYFDQNASSSSVSSPSTYSSGTNYTPMRNFSAQSDNSVFSTTNIDHSSPITPHMYTFNQFKNESACDSAISVSSLPNQTQNGNMPLSSNYQNMMLEERNKENRIPNSSSAEIPQRAKFMTTGIFQNTGELTNRASSISLSLRNHNSSQL</sequence>
<accession>P20437</accession>
<accession>D6W024</accession>
<reference key="1">
    <citation type="journal article" date="1989" name="Proc. Natl. Acad. Sci. U.S.A.">
        <title>A family of cyclin homologs that control the G1 phase in yeast.</title>
        <authorList>
            <person name="Hadwiger J.A."/>
            <person name="Wittenberg C."/>
            <person name="Richardson H.E."/>
            <person name="de Barros Lopes M."/>
            <person name="Reed S.I."/>
        </authorList>
    </citation>
    <scope>NUCLEOTIDE SEQUENCE [GENOMIC DNA]</scope>
</reference>
<reference key="2">
    <citation type="journal article" date="1990" name="Nucleic Acids Res.">
        <title>Nucleotide sequence of the Saccharomyces cerevisiae CLN1 and CLN2 genes.</title>
        <authorList>
            <person name="Hadwiger J.A."/>
            <person name="Reed S.I."/>
        </authorList>
    </citation>
    <scope>NUCLEOTIDE SEQUENCE [GENOMIC DNA]</scope>
</reference>
<reference key="3">
    <citation type="submission" date="1995-05" db="EMBL/GenBank/DDBJ databases">
        <authorList>
            <person name="Wittenberg C."/>
            <person name="Chapman-Shimshoni D."/>
        </authorList>
    </citation>
    <scope>SEQUENCE REVISION</scope>
</reference>
<reference key="4">
    <citation type="journal article" date="1997" name="Nature">
        <title>The nucleotide sequence of Saccharomyces cerevisiae chromosome XIII.</title>
        <authorList>
            <person name="Bowman S."/>
            <person name="Churcher C.M."/>
            <person name="Badcock K."/>
            <person name="Brown D."/>
            <person name="Chillingworth T."/>
            <person name="Connor R."/>
            <person name="Dedman K."/>
            <person name="Devlin K."/>
            <person name="Gentles S."/>
            <person name="Hamlin N."/>
            <person name="Hunt S."/>
            <person name="Jagels K."/>
            <person name="Lye G."/>
            <person name="Moule S."/>
            <person name="Odell C."/>
            <person name="Pearson D."/>
            <person name="Rajandream M.A."/>
            <person name="Rice P."/>
            <person name="Skelton J."/>
            <person name="Walsh S.V."/>
            <person name="Whitehead S."/>
            <person name="Barrell B.G."/>
        </authorList>
    </citation>
    <scope>NUCLEOTIDE SEQUENCE [LARGE SCALE GENOMIC DNA]</scope>
    <source>
        <strain>ATCC 204508 / S288c</strain>
    </source>
</reference>
<reference key="5">
    <citation type="journal article" date="2014" name="G3 (Bethesda)">
        <title>The reference genome sequence of Saccharomyces cerevisiae: Then and now.</title>
        <authorList>
            <person name="Engel S.R."/>
            <person name="Dietrich F.S."/>
            <person name="Fisk D.G."/>
            <person name="Binkley G."/>
            <person name="Balakrishnan R."/>
            <person name="Costanzo M.C."/>
            <person name="Dwight S.S."/>
            <person name="Hitz B.C."/>
            <person name="Karra K."/>
            <person name="Nash R.S."/>
            <person name="Weng S."/>
            <person name="Wong E.D."/>
            <person name="Lloyd P."/>
            <person name="Skrzypek M.S."/>
            <person name="Miyasato S.R."/>
            <person name="Simison M."/>
            <person name="Cherry J.M."/>
        </authorList>
    </citation>
    <scope>GENOME REANNOTATION</scope>
    <source>
        <strain>ATCC 204508 / S288c</strain>
    </source>
</reference>
<reference key="6">
    <citation type="journal article" date="2007" name="Genome Res.">
        <title>Approaching a complete repository of sequence-verified protein-encoding clones for Saccharomyces cerevisiae.</title>
        <authorList>
            <person name="Hu Y."/>
            <person name="Rolfs A."/>
            <person name="Bhullar B."/>
            <person name="Murthy T.V.S."/>
            <person name="Zhu C."/>
            <person name="Berger M.F."/>
            <person name="Camargo A.A."/>
            <person name="Kelley F."/>
            <person name="McCarron S."/>
            <person name="Jepson D."/>
            <person name="Richardson A."/>
            <person name="Raphael J."/>
            <person name="Moreira D."/>
            <person name="Taycher E."/>
            <person name="Zuo D."/>
            <person name="Mohr S."/>
            <person name="Kane M.F."/>
            <person name="Williamson J."/>
            <person name="Simpson A.J.G."/>
            <person name="Bulyk M.L."/>
            <person name="Harlow E."/>
            <person name="Marsischky G."/>
            <person name="Kolodner R.D."/>
            <person name="LaBaer J."/>
        </authorList>
    </citation>
    <scope>NUCLEOTIDE SEQUENCE [GENOMIC DNA]</scope>
    <source>
        <strain>ATCC 204508 / S288c</strain>
    </source>
</reference>
<reference key="7">
    <citation type="journal article" date="2003" name="Nature">
        <title>Global analysis of protein expression in yeast.</title>
        <authorList>
            <person name="Ghaemmaghami S."/>
            <person name="Huh W.-K."/>
            <person name="Bower K."/>
            <person name="Howson R.W."/>
            <person name="Belle A."/>
            <person name="Dephoure N."/>
            <person name="O'Shea E.K."/>
            <person name="Weissman J.S."/>
        </authorList>
    </citation>
    <scope>LEVEL OF PROTEIN EXPRESSION [LARGE SCALE ANALYSIS]</scope>
</reference>
<proteinExistence type="evidence at protein level"/>
<organism>
    <name type="scientific">Saccharomyces cerevisiae (strain ATCC 204508 / S288c)</name>
    <name type="common">Baker's yeast</name>
    <dbReference type="NCBI Taxonomy" id="559292"/>
    <lineage>
        <taxon>Eukaryota</taxon>
        <taxon>Fungi</taxon>
        <taxon>Dikarya</taxon>
        <taxon>Ascomycota</taxon>
        <taxon>Saccharomycotina</taxon>
        <taxon>Saccharomycetes</taxon>
        <taxon>Saccharomycetales</taxon>
        <taxon>Saccharomycetaceae</taxon>
        <taxon>Saccharomyces</taxon>
    </lineage>
</organism>
<comment type="function">
    <text>Essential for the control of the cell cycle at the G1/S (start) transition. Interacts with the CDC28 protein kinase to form MPF.</text>
</comment>
<comment type="interaction">
    <interactant intactId="EBI-4479">
        <id>P20437</id>
    </interactant>
    <interactant intactId="EBI-4253">
        <id>P00546</id>
        <label>CDC28</label>
    </interactant>
    <organismsDiffer>false</organismsDiffer>
    <experiments>7</experiments>
</comment>
<comment type="interaction">
    <interactant intactId="EBI-4479">
        <id>P20437</id>
    </interactant>
    <interactant intactId="EBI-13327">
        <id>P17157</id>
        <label>PHO85</label>
    </interactant>
    <organismsDiffer>false</organismsDiffer>
    <experiments>2</experiments>
</comment>
<comment type="developmental stage">
    <text>CLN1 and CLN2 mRNAs fluctuate periodically in the cell cycle, peaking in G1 phase.</text>
</comment>
<comment type="miscellaneous">
    <text evidence="2">Present with 319 molecules/cell in log phase SD medium.</text>
</comment>
<comment type="similarity">
    <text evidence="3">Belongs to the cyclin family.</text>
</comment>
<gene>
    <name type="primary">CLN1</name>
    <name type="ordered locus">YMR199W</name>
    <name type="ORF">YM9646.13</name>
</gene>
<evidence type="ECO:0000256" key="1">
    <source>
        <dbReference type="SAM" id="MobiDB-lite"/>
    </source>
</evidence>
<evidence type="ECO:0000269" key="2">
    <source>
    </source>
</evidence>
<evidence type="ECO:0000305" key="3"/>
<feature type="chain" id="PRO_0000080411" description="G1/S-specific cyclin CLN1">
    <location>
        <begin position="1"/>
        <end position="546"/>
    </location>
</feature>
<feature type="region of interest" description="Disordered" evidence="1">
    <location>
        <begin position="224"/>
        <end position="265"/>
    </location>
</feature>
<dbReference type="EMBL" id="M33264">
    <property type="protein sequence ID" value="AAA65724.1"/>
    <property type="molecule type" value="Genomic_DNA"/>
</dbReference>
<dbReference type="EMBL" id="Z47815">
    <property type="protein sequence ID" value="CAA87822.1"/>
    <property type="molecule type" value="Genomic_DNA"/>
</dbReference>
<dbReference type="EMBL" id="AY723855">
    <property type="protein sequence ID" value="AAU09772.1"/>
    <property type="molecule type" value="Genomic_DNA"/>
</dbReference>
<dbReference type="EMBL" id="BK006946">
    <property type="protein sequence ID" value="DAA10098.1"/>
    <property type="molecule type" value="Genomic_DNA"/>
</dbReference>
<dbReference type="PIR" id="S50929">
    <property type="entry name" value="COBYC1"/>
</dbReference>
<dbReference type="RefSeq" id="NP_013926.1">
    <property type="nucleotide sequence ID" value="NM_001182706.1"/>
</dbReference>
<dbReference type="SMR" id="P20437"/>
<dbReference type="BioGRID" id="35377">
    <property type="interactions" value="287"/>
</dbReference>
<dbReference type="ComplexPortal" id="CPX-1699">
    <property type="entry name" value="CLN1-CDC28 kinase complex"/>
</dbReference>
<dbReference type="DIP" id="DIP-2269N"/>
<dbReference type="FunCoup" id="P20437">
    <property type="interactions" value="409"/>
</dbReference>
<dbReference type="IntAct" id="P20437">
    <property type="interactions" value="11"/>
</dbReference>
<dbReference type="MINT" id="P20437"/>
<dbReference type="STRING" id="4932.YMR199W"/>
<dbReference type="GlyGen" id="P20437">
    <property type="glycosylation" value="1 site"/>
</dbReference>
<dbReference type="iPTMnet" id="P20437"/>
<dbReference type="PaxDb" id="4932-YMR199W"/>
<dbReference type="PeptideAtlas" id="P20437"/>
<dbReference type="TopDownProteomics" id="P20437"/>
<dbReference type="EnsemblFungi" id="YMR199W_mRNA">
    <property type="protein sequence ID" value="YMR199W"/>
    <property type="gene ID" value="YMR199W"/>
</dbReference>
<dbReference type="GeneID" id="855239"/>
<dbReference type="KEGG" id="sce:YMR199W"/>
<dbReference type="AGR" id="SGD:S000004812"/>
<dbReference type="SGD" id="S000004812">
    <property type="gene designation" value="CLN1"/>
</dbReference>
<dbReference type="VEuPathDB" id="FungiDB:YMR199W"/>
<dbReference type="eggNOG" id="KOG0653">
    <property type="taxonomic scope" value="Eukaryota"/>
</dbReference>
<dbReference type="GeneTree" id="ENSGT00940000176526"/>
<dbReference type="HOGENOM" id="CLU_536434_0_0_1"/>
<dbReference type="InParanoid" id="P20437"/>
<dbReference type="OMA" id="WDVYEPM"/>
<dbReference type="OrthoDB" id="5590282at2759"/>
<dbReference type="BioCyc" id="YEAST:G3O-32886-MONOMER"/>
<dbReference type="BioGRID-ORCS" id="855239">
    <property type="hits" value="0 hits in 10 CRISPR screens"/>
</dbReference>
<dbReference type="PRO" id="PR:P20437"/>
<dbReference type="Proteomes" id="UP000002311">
    <property type="component" value="Chromosome XIII"/>
</dbReference>
<dbReference type="RNAct" id="P20437">
    <property type="molecule type" value="protein"/>
</dbReference>
<dbReference type="GO" id="GO:0000307">
    <property type="term" value="C:cyclin-dependent protein kinase holoenzyme complex"/>
    <property type="evidence" value="ECO:0000353"/>
    <property type="project" value="ComplexPortal"/>
</dbReference>
<dbReference type="GO" id="GO:0005737">
    <property type="term" value="C:cytoplasm"/>
    <property type="evidence" value="ECO:0000314"/>
    <property type="project" value="SGD"/>
</dbReference>
<dbReference type="GO" id="GO:0005634">
    <property type="term" value="C:nucleus"/>
    <property type="evidence" value="ECO:0000314"/>
    <property type="project" value="SGD"/>
</dbReference>
<dbReference type="GO" id="GO:0016538">
    <property type="term" value="F:cyclin-dependent protein serine/threonine kinase regulator activity"/>
    <property type="evidence" value="ECO:0000314"/>
    <property type="project" value="SGD"/>
</dbReference>
<dbReference type="GO" id="GO:0051301">
    <property type="term" value="P:cell division"/>
    <property type="evidence" value="ECO:0007669"/>
    <property type="project" value="UniProtKB-KW"/>
</dbReference>
<dbReference type="GO" id="GO:0000082">
    <property type="term" value="P:G1/S transition of mitotic cell cycle"/>
    <property type="evidence" value="ECO:0000318"/>
    <property type="project" value="GO_Central"/>
</dbReference>
<dbReference type="GO" id="GO:1902806">
    <property type="term" value="P:regulation of cell cycle G1/S phase transition"/>
    <property type="evidence" value="ECO:0000303"/>
    <property type="project" value="ComplexPortal"/>
</dbReference>
<dbReference type="GO" id="GO:0007089">
    <property type="term" value="P:traversing start control point of mitotic cell cycle"/>
    <property type="evidence" value="ECO:0000316"/>
    <property type="project" value="SGD"/>
</dbReference>
<dbReference type="CDD" id="cd20559">
    <property type="entry name" value="CYCLIN_ScCLN_like"/>
    <property type="match status" value="1"/>
</dbReference>
<dbReference type="FunFam" id="1.10.472.10:FF:000080">
    <property type="entry name" value="G1/S-specific cyclin"/>
    <property type="match status" value="1"/>
</dbReference>
<dbReference type="Gene3D" id="1.10.472.10">
    <property type="entry name" value="Cyclin-like"/>
    <property type="match status" value="1"/>
</dbReference>
<dbReference type="InterPro" id="IPR013763">
    <property type="entry name" value="Cyclin-like_dom"/>
</dbReference>
<dbReference type="InterPro" id="IPR036915">
    <property type="entry name" value="Cyclin-like_sf"/>
</dbReference>
<dbReference type="InterPro" id="IPR014399">
    <property type="entry name" value="Cyclin_CLN"/>
</dbReference>
<dbReference type="InterPro" id="IPR006671">
    <property type="entry name" value="Cyclin_N"/>
</dbReference>
<dbReference type="InterPro" id="IPR048258">
    <property type="entry name" value="Cyclins_cyclin-box"/>
</dbReference>
<dbReference type="PANTHER" id="PTHR21615">
    <property type="entry name" value="CYCLIN N-TERMINAL DOMAIN-CONTAINING PROTEIN 1"/>
    <property type="match status" value="1"/>
</dbReference>
<dbReference type="PANTHER" id="PTHR21615:SF2">
    <property type="entry name" value="CYCLIN N-TERMINAL DOMAIN-CONTAINING PROTEIN 1"/>
    <property type="match status" value="1"/>
</dbReference>
<dbReference type="Pfam" id="PF00134">
    <property type="entry name" value="Cyclin_N"/>
    <property type="match status" value="1"/>
</dbReference>
<dbReference type="PIRSF" id="PIRSF001770">
    <property type="entry name" value="Cyclin_CLN"/>
    <property type="match status" value="1"/>
</dbReference>
<dbReference type="SMART" id="SM00385">
    <property type="entry name" value="CYCLIN"/>
    <property type="match status" value="1"/>
</dbReference>
<dbReference type="SUPFAM" id="SSF47954">
    <property type="entry name" value="Cyclin-like"/>
    <property type="match status" value="1"/>
</dbReference>
<dbReference type="PROSITE" id="PS00292">
    <property type="entry name" value="CYCLINS"/>
    <property type="match status" value="1"/>
</dbReference>
<name>CG11_YEAST</name>